<dbReference type="EMBL" id="BX284604">
    <property type="protein sequence ID" value="CCD70433.1"/>
    <property type="molecule type" value="Genomic_DNA"/>
</dbReference>
<dbReference type="PIR" id="B88734">
    <property type="entry name" value="B88734"/>
</dbReference>
<dbReference type="RefSeq" id="NP_501231.1">
    <property type="nucleotide sequence ID" value="NM_068830.10"/>
</dbReference>
<dbReference type="FunCoup" id="Q19972">
    <property type="interactions" value="9"/>
</dbReference>
<dbReference type="STRING" id="6239.F32E10.2.3"/>
<dbReference type="PaxDb" id="6239-F32E10.2"/>
<dbReference type="PeptideAtlas" id="Q19972"/>
<dbReference type="EnsemblMetazoa" id="F32E10.2.1">
    <property type="protein sequence ID" value="F32E10.2.1"/>
    <property type="gene ID" value="WBGene00017990"/>
</dbReference>
<dbReference type="EnsemblMetazoa" id="F32E10.2.2">
    <property type="protein sequence ID" value="F32E10.2.2"/>
    <property type="gene ID" value="WBGene00017990"/>
</dbReference>
<dbReference type="GeneID" id="177536"/>
<dbReference type="KEGG" id="cel:CELE_F32E10.2"/>
<dbReference type="UCSC" id="F32E10.2">
    <property type="organism name" value="c. elegans"/>
</dbReference>
<dbReference type="AGR" id="WB:WBGene00017990"/>
<dbReference type="CTD" id="177536"/>
<dbReference type="WormBase" id="F32E10.2">
    <property type="protein sequence ID" value="CE04475"/>
    <property type="gene ID" value="WBGene00017990"/>
    <property type="gene designation" value="cec-4"/>
</dbReference>
<dbReference type="eggNOG" id="KOG1911">
    <property type="taxonomic scope" value="Eukaryota"/>
</dbReference>
<dbReference type="HOGENOM" id="CLU_1046720_0_0_1"/>
<dbReference type="InParanoid" id="Q19972"/>
<dbReference type="OrthoDB" id="5869757at2759"/>
<dbReference type="PRO" id="PR:Q19972"/>
<dbReference type="Proteomes" id="UP000001940">
    <property type="component" value="Chromosome IV"/>
</dbReference>
<dbReference type="Bgee" id="WBGene00017990">
    <property type="expression patterns" value="Expressed in embryo and 4 other cell types or tissues"/>
</dbReference>
<dbReference type="GO" id="GO:0005637">
    <property type="term" value="C:nuclear inner membrane"/>
    <property type="evidence" value="ECO:0000314"/>
    <property type="project" value="WormBase"/>
</dbReference>
<dbReference type="GO" id="GO:0035064">
    <property type="term" value="F:methylated histone binding"/>
    <property type="evidence" value="ECO:0000314"/>
    <property type="project" value="WormBase"/>
</dbReference>
<dbReference type="GO" id="GO:0097240">
    <property type="term" value="P:chromosome attachment to the nuclear envelope"/>
    <property type="evidence" value="ECO:0000315"/>
    <property type="project" value="WormBase"/>
</dbReference>
<dbReference type="GO" id="GO:0045595">
    <property type="term" value="P:regulation of cell differentiation"/>
    <property type="evidence" value="ECO:0000315"/>
    <property type="project" value="WormBase"/>
</dbReference>
<dbReference type="GO" id="GO:0010468">
    <property type="term" value="P:regulation of gene expression"/>
    <property type="evidence" value="ECO:0000315"/>
    <property type="project" value="WormBase"/>
</dbReference>
<dbReference type="CDD" id="cd18961">
    <property type="entry name" value="CD_CEC-4_like"/>
    <property type="match status" value="1"/>
</dbReference>
<dbReference type="FunFam" id="2.40.50.40:FF:000044">
    <property type="entry name" value="C.Elegans Chromodomain protein"/>
    <property type="match status" value="1"/>
</dbReference>
<dbReference type="Gene3D" id="2.40.50.40">
    <property type="match status" value="1"/>
</dbReference>
<dbReference type="InterPro" id="IPR037948">
    <property type="entry name" value="Cec-4"/>
</dbReference>
<dbReference type="InterPro" id="IPR016197">
    <property type="entry name" value="Chromo-like_dom_sf"/>
</dbReference>
<dbReference type="InterPro" id="IPR000953">
    <property type="entry name" value="Chromo/chromo_shadow_dom"/>
</dbReference>
<dbReference type="InterPro" id="IPR023780">
    <property type="entry name" value="Chromo_domain"/>
</dbReference>
<dbReference type="PANTHER" id="PTHR10503:SF24">
    <property type="entry name" value="CHROMO DOMAIN-CONTAINING PROTEIN CEC-4"/>
    <property type="match status" value="1"/>
</dbReference>
<dbReference type="PANTHER" id="PTHR10503">
    <property type="entry name" value="HP1 LIKE (HETEROCHROMATIN PROTEIN)-RELATED"/>
    <property type="match status" value="1"/>
</dbReference>
<dbReference type="Pfam" id="PF00385">
    <property type="entry name" value="Chromo"/>
    <property type="match status" value="1"/>
</dbReference>
<dbReference type="SMART" id="SM00298">
    <property type="entry name" value="CHROMO"/>
    <property type="match status" value="1"/>
</dbReference>
<dbReference type="SUPFAM" id="SSF54160">
    <property type="entry name" value="Chromo domain-like"/>
    <property type="match status" value="1"/>
</dbReference>
<dbReference type="PROSITE" id="PS50013">
    <property type="entry name" value="CHROMO_2"/>
    <property type="match status" value="1"/>
</dbReference>
<sequence>MAKKTVEGEHGTPKTNFTKKETSKNHDDFKKIIGHKVVEEHYVEYEVELTSGKTITATEFDFKGDDSLLSTYKKKVTKQSDDSSGEYAVERVLAHRKVKGSPLYLVQWKGYPHPVWNSEMWEEDLDNCKDLLAAYKKHQEDLKIAQTPKKTPSKTPKKTPKSLKRRALTPSDDEEEAGPIAPEPKKTPKQSTKKLKRTTSPETNLVEKSKKKAIPDLENHTLDQEKNDVIERVEEIQEDEDDDDEQREEVVTTAPVETKSRWGFGSWKWF</sequence>
<organism evidence="8">
    <name type="scientific">Caenorhabditis elegans</name>
    <dbReference type="NCBI Taxonomy" id="6239"/>
    <lineage>
        <taxon>Eukaryota</taxon>
        <taxon>Metazoa</taxon>
        <taxon>Ecdysozoa</taxon>
        <taxon>Nematoda</taxon>
        <taxon>Chromadorea</taxon>
        <taxon>Rhabditida</taxon>
        <taxon>Rhabditina</taxon>
        <taxon>Rhabditomorpha</taxon>
        <taxon>Rhabditoidea</taxon>
        <taxon>Rhabditidae</taxon>
        <taxon>Peloderinae</taxon>
        <taxon>Caenorhabditis</taxon>
    </lineage>
</organism>
<gene>
    <name evidence="9" type="primary">cec-4</name>
    <name evidence="9" type="ORF">F32E10.2</name>
</gene>
<feature type="chain" id="PRO_0000435681" description="Chromo domain-containing protein cec-4" evidence="5">
    <location>
        <begin position="1"/>
        <end position="270"/>
    </location>
</feature>
<feature type="domain" description="Chromo" evidence="1">
    <location>
        <begin position="87"/>
        <end position="147"/>
    </location>
</feature>
<feature type="region of interest" description="Disordered" evidence="2">
    <location>
        <begin position="1"/>
        <end position="24"/>
    </location>
</feature>
<feature type="region of interest" description="Disordered" evidence="2">
    <location>
        <begin position="143"/>
        <end position="229"/>
    </location>
</feature>
<feature type="compositionally biased region" description="Basic residues" evidence="2">
    <location>
        <begin position="151"/>
        <end position="167"/>
    </location>
</feature>
<feature type="compositionally biased region" description="Basic residues" evidence="2">
    <location>
        <begin position="187"/>
        <end position="197"/>
    </location>
</feature>
<feature type="compositionally biased region" description="Basic and acidic residues" evidence="2">
    <location>
        <begin position="205"/>
        <end position="229"/>
    </location>
</feature>
<feature type="mutagenesis site" description="Abolishes binding to the tri-methylated 'Lys-9' residues on histone H3; when associated with A-111." evidence="3">
    <original>Y</original>
    <variation>A</variation>
    <location>
        <position position="87"/>
    </location>
</feature>
<feature type="mutagenesis site" description="Abolishes binding to the tri-methylated 'Lys-9' residues on histone H3; when associated with A-87." evidence="3">
    <original>Y</original>
    <variation>A</variation>
    <location>
        <position position="111"/>
    </location>
</feature>
<reference evidence="8" key="1">
    <citation type="journal article" date="1998" name="Science">
        <title>Genome sequence of the nematode C. elegans: a platform for investigating biology.</title>
        <authorList>
            <consortium name="The C. elegans sequencing consortium"/>
        </authorList>
    </citation>
    <scope>NUCLEOTIDE SEQUENCE [LARGE SCALE GENOMIC DNA]</scope>
    <source>
        <strain evidence="7 8">Bristol N2</strain>
    </source>
</reference>
<reference evidence="5" key="2">
    <citation type="journal article" date="2015" name="Cell">
        <title>Perinuclear anchoring of H3K9-methylated chromatin stabilizes induced cell fate in C. elegans embryos.</title>
        <authorList>
            <person name="Gonzalez-Sandoval A."/>
            <person name="Towbin B.D."/>
            <person name="Kalck V."/>
            <person name="Cabianca D.S."/>
            <person name="Gaidatzis D."/>
            <person name="Hauer M.H."/>
            <person name="Geng L."/>
            <person name="Wang L."/>
            <person name="Yang T."/>
            <person name="Wang X."/>
            <person name="Zhao K."/>
            <person name="Gasser S.M."/>
        </authorList>
    </citation>
    <scope>FUNCTION</scope>
    <scope>INTERACTION WITH HISTONE H3 LYS-9</scope>
    <scope>SUBCELLULAR LOCATION</scope>
    <scope>DEVELOPMENTAL STAGE</scope>
    <scope>DISRUPTION PHENOTYPE</scope>
    <scope>MUTAGENESIS OF TYR-87 AND TYR-111</scope>
</reference>
<reference evidence="5" key="3">
    <citation type="journal article" date="2019" name="Nature">
        <title>Active chromatin marks drive spatial sequestration of heterochromatin in C. elegans nuclei.</title>
        <authorList>
            <person name="Cabianca D.S."/>
            <person name="Munoz-Jimenez C."/>
            <person name="Kalck V."/>
            <person name="Gaidatzis D."/>
            <person name="Padeken J."/>
            <person name="Seeber A."/>
            <person name="Askjaer P."/>
            <person name="Gasser S.M."/>
        </authorList>
    </citation>
    <scope>FUNCTION</scope>
    <scope>DISRUPTION PHENOTYPE</scope>
</reference>
<evidence type="ECO:0000255" key="1">
    <source>
        <dbReference type="PROSITE-ProRule" id="PRU00053"/>
    </source>
</evidence>
<evidence type="ECO:0000256" key="2">
    <source>
        <dbReference type="SAM" id="MobiDB-lite"/>
    </source>
</evidence>
<evidence type="ECO:0000269" key="3">
    <source>
    </source>
</evidence>
<evidence type="ECO:0000269" key="4">
    <source>
    </source>
</evidence>
<evidence type="ECO:0000305" key="5"/>
<evidence type="ECO:0000305" key="6">
    <source>
    </source>
</evidence>
<evidence type="ECO:0000312" key="7">
    <source>
        <dbReference type="EMBL" id="CCD70433.1"/>
    </source>
</evidence>
<evidence type="ECO:0000312" key="8">
    <source>
        <dbReference type="Proteomes" id="UP000001940"/>
    </source>
</evidence>
<evidence type="ECO:0000312" key="9">
    <source>
        <dbReference type="WormBase" id="F32E10.2"/>
    </source>
</evidence>
<accession>Q19972</accession>
<keyword id="KW-0175">Coiled coil</keyword>
<keyword id="KW-0472">Membrane</keyword>
<keyword id="KW-0539">Nucleus</keyword>
<keyword id="KW-1185">Reference proteome</keyword>
<protein>
    <recommendedName>
        <fullName evidence="5">Chromo domain-containing protein cec-4</fullName>
    </recommendedName>
</protein>
<comment type="function">
    <text evidence="3 4">Chromatin anchor protein which binds to methylated lysine residues on histone H3, thereby recruiting heterochromatin to the nuclear periphery, especially in embryonic cells, with a lesser role in differentiated cells (PubMed:26607792, PubMed:31118512). May be required for the correct positioning of chromatin and nucleoli in embryos (PubMed:26607792).</text>
</comment>
<comment type="subunit">
    <text evidence="3">Interacts with mono-, di- and tri-methylated 'Lys-9' residues on histone H3. Weakly interacts with methylated 'Lys-37' residues on histone H3.</text>
</comment>
<comment type="subcellular location">
    <subcellularLocation>
        <location evidence="3">Nucleus inner membrane</location>
    </subcellularLocation>
    <subcellularLocation>
        <location evidence="6">Membrane</location>
        <topology evidence="6">Peripheral membrane protein</topology>
    </subcellularLocation>
</comment>
<comment type="developmental stage">
    <text evidence="3">Expressed at all developmental stages from embryogenesis to adulthood. Evenly expressed in most tissues during the L1 stage of larval development, however, expression is weak in the intestine and high in muscle.</text>
</comment>
<comment type="disruption phenotype">
    <text evidence="3 4">Reduced anchoring of heterochromatin to the nuclear periphery which is exacerbated on an mrg-1 mutant background and is partially blocked by RNAi-mediated knockdown of cbp-1 or atf-8 (PubMed:26607792, PubMed:31118512). Altered nucleolar localization with nucleoli positioned away from the nuclear periphery (PubMed:26607792). When exposed to hlh-1, a transcription factor that induces muscle differentiation, 25% of embryos continue to develop and the embryonic cells do not transdifferentiate into muscle-like cells like their wild-type counterparts (PubMed:26607792).</text>
</comment>
<name>CEC4_CAEEL</name>
<proteinExistence type="evidence at protein level"/>